<protein>
    <recommendedName>
        <fullName evidence="1">Large ribosomal subunit protein bL28</fullName>
    </recommendedName>
    <alternativeName>
        <fullName evidence="2">50S ribosomal protein L28</fullName>
    </alternativeName>
</protein>
<name>RL28_STRPB</name>
<accession>Q1J9X9</accession>
<sequence>MAKVCYFTGRKTVSGNNRSHAMNQTKRTVKPNLQKVTILVDGKPKKVWASARALKSGKVERI</sequence>
<proteinExistence type="inferred from homology"/>
<evidence type="ECO:0000255" key="1">
    <source>
        <dbReference type="HAMAP-Rule" id="MF_00373"/>
    </source>
</evidence>
<evidence type="ECO:0000305" key="2"/>
<reference key="1">
    <citation type="journal article" date="2006" name="Proc. Natl. Acad. Sci. U.S.A.">
        <title>Molecular genetic anatomy of inter- and intraserotype variation in the human bacterial pathogen group A Streptococcus.</title>
        <authorList>
            <person name="Beres S.B."/>
            <person name="Richter E.W."/>
            <person name="Nagiec M.J."/>
            <person name="Sumby P."/>
            <person name="Porcella S.F."/>
            <person name="DeLeo F.R."/>
            <person name="Musser J.M."/>
        </authorList>
    </citation>
    <scope>NUCLEOTIDE SEQUENCE [LARGE SCALE GENOMIC DNA]</scope>
    <source>
        <strain>MGAS2096</strain>
    </source>
</reference>
<dbReference type="EMBL" id="CP000261">
    <property type="protein sequence ID" value="ABF36682.1"/>
    <property type="molecule type" value="Genomic_DNA"/>
</dbReference>
<dbReference type="SMR" id="Q1J9X9"/>
<dbReference type="KEGG" id="spj:MGAS2096_Spy1630"/>
<dbReference type="HOGENOM" id="CLU_064548_7_1_9"/>
<dbReference type="GO" id="GO:1990904">
    <property type="term" value="C:ribonucleoprotein complex"/>
    <property type="evidence" value="ECO:0007669"/>
    <property type="project" value="UniProtKB-KW"/>
</dbReference>
<dbReference type="GO" id="GO:0005840">
    <property type="term" value="C:ribosome"/>
    <property type="evidence" value="ECO:0007669"/>
    <property type="project" value="UniProtKB-KW"/>
</dbReference>
<dbReference type="GO" id="GO:0003735">
    <property type="term" value="F:structural constituent of ribosome"/>
    <property type="evidence" value="ECO:0007669"/>
    <property type="project" value="InterPro"/>
</dbReference>
<dbReference type="GO" id="GO:0006412">
    <property type="term" value="P:translation"/>
    <property type="evidence" value="ECO:0007669"/>
    <property type="project" value="UniProtKB-UniRule"/>
</dbReference>
<dbReference type="Gene3D" id="2.30.170.40">
    <property type="entry name" value="Ribosomal protein L28/L24"/>
    <property type="match status" value="1"/>
</dbReference>
<dbReference type="HAMAP" id="MF_00373">
    <property type="entry name" value="Ribosomal_bL28"/>
    <property type="match status" value="1"/>
</dbReference>
<dbReference type="InterPro" id="IPR050096">
    <property type="entry name" value="Bacterial_rp_bL28"/>
</dbReference>
<dbReference type="InterPro" id="IPR026569">
    <property type="entry name" value="Ribosomal_bL28"/>
</dbReference>
<dbReference type="InterPro" id="IPR034704">
    <property type="entry name" value="Ribosomal_bL28/bL31-like_sf"/>
</dbReference>
<dbReference type="InterPro" id="IPR001383">
    <property type="entry name" value="Ribosomal_bL28_bact-type"/>
</dbReference>
<dbReference type="InterPro" id="IPR037147">
    <property type="entry name" value="Ribosomal_bL28_sf"/>
</dbReference>
<dbReference type="NCBIfam" id="TIGR00009">
    <property type="entry name" value="L28"/>
    <property type="match status" value="1"/>
</dbReference>
<dbReference type="PANTHER" id="PTHR39080">
    <property type="entry name" value="50S RIBOSOMAL PROTEIN L28"/>
    <property type="match status" value="1"/>
</dbReference>
<dbReference type="PANTHER" id="PTHR39080:SF1">
    <property type="entry name" value="LARGE RIBOSOMAL SUBUNIT PROTEIN BL28A"/>
    <property type="match status" value="1"/>
</dbReference>
<dbReference type="Pfam" id="PF00830">
    <property type="entry name" value="Ribosomal_L28"/>
    <property type="match status" value="1"/>
</dbReference>
<dbReference type="SUPFAM" id="SSF143800">
    <property type="entry name" value="L28p-like"/>
    <property type="match status" value="1"/>
</dbReference>
<keyword id="KW-0687">Ribonucleoprotein</keyword>
<keyword id="KW-0689">Ribosomal protein</keyword>
<feature type="chain" id="PRO_1000007370" description="Large ribosomal subunit protein bL28">
    <location>
        <begin position="1"/>
        <end position="62"/>
    </location>
</feature>
<organism>
    <name type="scientific">Streptococcus pyogenes serotype M12 (strain MGAS2096)</name>
    <dbReference type="NCBI Taxonomy" id="370553"/>
    <lineage>
        <taxon>Bacteria</taxon>
        <taxon>Bacillati</taxon>
        <taxon>Bacillota</taxon>
        <taxon>Bacilli</taxon>
        <taxon>Lactobacillales</taxon>
        <taxon>Streptococcaceae</taxon>
        <taxon>Streptococcus</taxon>
    </lineage>
</organism>
<gene>
    <name evidence="1" type="primary">rpmB</name>
    <name type="ordered locus">MGAS2096_Spy1630</name>
</gene>
<comment type="similarity">
    <text evidence="1">Belongs to the bacterial ribosomal protein bL28 family.</text>
</comment>